<reference key="1">
    <citation type="journal article" date="2005" name="Mol. Genet. Genomics">
        <title>Mpg1, a fission yeast protein required for proper septum structure, is involved in cell cycle progression through cell-size checkpoint.</title>
        <authorList>
            <person name="Donoso I."/>
            <person name="Munoz-Centeno M.C."/>
            <person name="Sanchez-Duran M.A."/>
            <person name="Flores A."/>
            <person name="Daga R.R."/>
            <person name="Guevara C.M."/>
            <person name="Bejarano E.R."/>
        </authorList>
    </citation>
    <scope>NUCLEOTIDE SEQUENCE [GENOMIC DNA]</scope>
    <scope>FUNCTION</scope>
    <scope>SUBCELLULAR LOCATION</scope>
    <source>
        <strain>972 / ATCC 24843</strain>
    </source>
</reference>
<reference key="2">
    <citation type="journal article" date="1997" name="DNA Res.">
        <title>Identification of open reading frames in Schizosaccharomyces pombe cDNAs.</title>
        <authorList>
            <person name="Yoshioka S."/>
            <person name="Kato K."/>
            <person name="Nakai K."/>
            <person name="Okayama H."/>
            <person name="Nojima H."/>
        </authorList>
    </citation>
    <scope>NUCLEOTIDE SEQUENCE [LARGE SCALE MRNA]</scope>
    <source>
        <strain>PR745</strain>
    </source>
</reference>
<reference key="3">
    <citation type="journal article" date="2002" name="Nature">
        <title>The genome sequence of Schizosaccharomyces pombe.</title>
        <authorList>
            <person name="Wood V."/>
            <person name="Gwilliam R."/>
            <person name="Rajandream M.A."/>
            <person name="Lyne M.H."/>
            <person name="Lyne R."/>
            <person name="Stewart A."/>
            <person name="Sgouros J.G."/>
            <person name="Peat N."/>
            <person name="Hayles J."/>
            <person name="Baker S.G."/>
            <person name="Basham D."/>
            <person name="Bowman S."/>
            <person name="Brooks K."/>
            <person name="Brown D."/>
            <person name="Brown S."/>
            <person name="Chillingworth T."/>
            <person name="Churcher C.M."/>
            <person name="Collins M."/>
            <person name="Connor R."/>
            <person name="Cronin A."/>
            <person name="Davis P."/>
            <person name="Feltwell T."/>
            <person name="Fraser A."/>
            <person name="Gentles S."/>
            <person name="Goble A."/>
            <person name="Hamlin N."/>
            <person name="Harris D.E."/>
            <person name="Hidalgo J."/>
            <person name="Hodgson G."/>
            <person name="Holroyd S."/>
            <person name="Hornsby T."/>
            <person name="Howarth S."/>
            <person name="Huckle E.J."/>
            <person name="Hunt S."/>
            <person name="Jagels K."/>
            <person name="James K.D."/>
            <person name="Jones L."/>
            <person name="Jones M."/>
            <person name="Leather S."/>
            <person name="McDonald S."/>
            <person name="McLean J."/>
            <person name="Mooney P."/>
            <person name="Moule S."/>
            <person name="Mungall K.L."/>
            <person name="Murphy L.D."/>
            <person name="Niblett D."/>
            <person name="Odell C."/>
            <person name="Oliver K."/>
            <person name="O'Neil S."/>
            <person name="Pearson D."/>
            <person name="Quail M.A."/>
            <person name="Rabbinowitsch E."/>
            <person name="Rutherford K.M."/>
            <person name="Rutter S."/>
            <person name="Saunders D."/>
            <person name="Seeger K."/>
            <person name="Sharp S."/>
            <person name="Skelton J."/>
            <person name="Simmonds M.N."/>
            <person name="Squares R."/>
            <person name="Squares S."/>
            <person name="Stevens K."/>
            <person name="Taylor K."/>
            <person name="Taylor R.G."/>
            <person name="Tivey A."/>
            <person name="Walsh S.V."/>
            <person name="Warren T."/>
            <person name="Whitehead S."/>
            <person name="Woodward J.R."/>
            <person name="Volckaert G."/>
            <person name="Aert R."/>
            <person name="Robben J."/>
            <person name="Grymonprez B."/>
            <person name="Weltjens I."/>
            <person name="Vanstreels E."/>
            <person name="Rieger M."/>
            <person name="Schaefer M."/>
            <person name="Mueller-Auer S."/>
            <person name="Gabel C."/>
            <person name="Fuchs M."/>
            <person name="Duesterhoeft A."/>
            <person name="Fritzc C."/>
            <person name="Holzer E."/>
            <person name="Moestl D."/>
            <person name="Hilbert H."/>
            <person name="Borzym K."/>
            <person name="Langer I."/>
            <person name="Beck A."/>
            <person name="Lehrach H."/>
            <person name="Reinhardt R."/>
            <person name="Pohl T.M."/>
            <person name="Eger P."/>
            <person name="Zimmermann W."/>
            <person name="Wedler H."/>
            <person name="Wambutt R."/>
            <person name="Purnelle B."/>
            <person name="Goffeau A."/>
            <person name="Cadieu E."/>
            <person name="Dreano S."/>
            <person name="Gloux S."/>
            <person name="Lelaure V."/>
            <person name="Mottier S."/>
            <person name="Galibert F."/>
            <person name="Aves S.J."/>
            <person name="Xiang Z."/>
            <person name="Hunt C."/>
            <person name="Moore K."/>
            <person name="Hurst S.M."/>
            <person name="Lucas M."/>
            <person name="Rochet M."/>
            <person name="Gaillardin C."/>
            <person name="Tallada V.A."/>
            <person name="Garzon A."/>
            <person name="Thode G."/>
            <person name="Daga R.R."/>
            <person name="Cruzado L."/>
            <person name="Jimenez J."/>
            <person name="Sanchez M."/>
            <person name="del Rey F."/>
            <person name="Benito J."/>
            <person name="Dominguez A."/>
            <person name="Revuelta J.L."/>
            <person name="Moreno S."/>
            <person name="Armstrong J."/>
            <person name="Forsburg S.L."/>
            <person name="Cerutti L."/>
            <person name="Lowe T."/>
            <person name="McCombie W.R."/>
            <person name="Paulsen I."/>
            <person name="Potashkin J."/>
            <person name="Shpakovski G.V."/>
            <person name="Ussery D."/>
            <person name="Barrell B.G."/>
            <person name="Nurse P."/>
        </authorList>
    </citation>
    <scope>NUCLEOTIDE SEQUENCE [LARGE SCALE GENOMIC DNA]</scope>
    <source>
        <strain>972 / ATCC 24843</strain>
    </source>
</reference>
<keyword id="KW-0131">Cell cycle</keyword>
<keyword id="KW-0132">Cell division</keyword>
<keyword id="KW-0963">Cytoplasm</keyword>
<keyword id="KW-0342">GTP-binding</keyword>
<keyword id="KW-0547">Nucleotide-binding</keyword>
<keyword id="KW-0548">Nucleotidyltransferase</keyword>
<keyword id="KW-1185">Reference proteome</keyword>
<keyword id="KW-0717">Septation</keyword>
<keyword id="KW-0808">Transferase</keyword>
<dbReference type="EC" id="2.7.7.13"/>
<dbReference type="EMBL" id="D89128">
    <property type="protein sequence ID" value="BAA13790.1"/>
    <property type="molecule type" value="mRNA"/>
</dbReference>
<dbReference type="EMBL" id="CU329672">
    <property type="protein sequence ID" value="CAA20770.1"/>
    <property type="molecule type" value="Genomic_DNA"/>
</dbReference>
<dbReference type="PIR" id="T41209">
    <property type="entry name" value="T41209"/>
</dbReference>
<dbReference type="PIR" id="T42371">
    <property type="entry name" value="T42371"/>
</dbReference>
<dbReference type="RefSeq" id="NP_588405.1">
    <property type="nucleotide sequence ID" value="NM_001023396.2"/>
</dbReference>
<dbReference type="SMR" id="O74484"/>
<dbReference type="BioGRID" id="275326">
    <property type="interactions" value="8"/>
</dbReference>
<dbReference type="FunCoup" id="O74484">
    <property type="interactions" value="459"/>
</dbReference>
<dbReference type="STRING" id="284812.O74484"/>
<dbReference type="iPTMnet" id="O74484"/>
<dbReference type="PaxDb" id="4896-SPCC1906.01.1"/>
<dbReference type="EnsemblFungi" id="SPCC1906.01.1">
    <property type="protein sequence ID" value="SPCC1906.01.1:pep"/>
    <property type="gene ID" value="SPCC1906.01"/>
</dbReference>
<dbReference type="PomBase" id="SPCC1906.01">
    <property type="gene designation" value="mpg1"/>
</dbReference>
<dbReference type="VEuPathDB" id="FungiDB:SPCC1906.01"/>
<dbReference type="eggNOG" id="KOG1322">
    <property type="taxonomic scope" value="Eukaryota"/>
</dbReference>
<dbReference type="HOGENOM" id="CLU_029499_0_0_1"/>
<dbReference type="InParanoid" id="O74484"/>
<dbReference type="OMA" id="GPNCWIC"/>
<dbReference type="PhylomeDB" id="O74484"/>
<dbReference type="Reactome" id="R-SPO-446205">
    <property type="pathway name" value="Synthesis of GDP-mannose"/>
</dbReference>
<dbReference type="UniPathway" id="UPA00126">
    <property type="reaction ID" value="UER00930"/>
</dbReference>
<dbReference type="PRO" id="PR:O74484"/>
<dbReference type="Proteomes" id="UP000002485">
    <property type="component" value="Chromosome III"/>
</dbReference>
<dbReference type="GO" id="GO:0005737">
    <property type="term" value="C:cytoplasm"/>
    <property type="evidence" value="ECO:0000318"/>
    <property type="project" value="GO_Central"/>
</dbReference>
<dbReference type="GO" id="GO:0005829">
    <property type="term" value="C:cytosol"/>
    <property type="evidence" value="ECO:0007005"/>
    <property type="project" value="PomBase"/>
</dbReference>
<dbReference type="GO" id="GO:0005525">
    <property type="term" value="F:GTP binding"/>
    <property type="evidence" value="ECO:0007669"/>
    <property type="project" value="UniProtKB-KW"/>
</dbReference>
<dbReference type="GO" id="GO:0004475">
    <property type="term" value="F:mannose-1-phosphate guanylyltransferase (GTP) activity"/>
    <property type="evidence" value="ECO:0000318"/>
    <property type="project" value="GO_Central"/>
</dbReference>
<dbReference type="GO" id="GO:0000917">
    <property type="term" value="P:division septum assembly"/>
    <property type="evidence" value="ECO:0007669"/>
    <property type="project" value="UniProtKB-KW"/>
</dbReference>
<dbReference type="GO" id="GO:0009298">
    <property type="term" value="P:GDP-mannose biosynthetic process"/>
    <property type="evidence" value="ECO:0000318"/>
    <property type="project" value="GO_Central"/>
</dbReference>
<dbReference type="GO" id="GO:0006486">
    <property type="term" value="P:protein glycosylation"/>
    <property type="evidence" value="ECO:0000318"/>
    <property type="project" value="GO_Central"/>
</dbReference>
<dbReference type="CDD" id="cd05824">
    <property type="entry name" value="LbH_M1P_guanylylT_C"/>
    <property type="match status" value="1"/>
</dbReference>
<dbReference type="CDD" id="cd06425">
    <property type="entry name" value="M1P_guanylylT_B_like_N"/>
    <property type="match status" value="1"/>
</dbReference>
<dbReference type="FunFam" id="2.160.10.10:FF:000017">
    <property type="entry name" value="Mannose-1-phosphate guanyltransferase"/>
    <property type="match status" value="1"/>
</dbReference>
<dbReference type="FunFam" id="3.90.550.10:FF:000013">
    <property type="entry name" value="mannose-1-phosphate guanyltransferase beta"/>
    <property type="match status" value="1"/>
</dbReference>
<dbReference type="Gene3D" id="2.160.10.10">
    <property type="entry name" value="Hexapeptide repeat proteins"/>
    <property type="match status" value="1"/>
</dbReference>
<dbReference type="Gene3D" id="3.90.550.10">
    <property type="entry name" value="Spore Coat Polysaccharide Biosynthesis Protein SpsA, Chain A"/>
    <property type="match status" value="1"/>
</dbReference>
<dbReference type="InterPro" id="IPR056729">
    <property type="entry name" value="GMPPB_C"/>
</dbReference>
<dbReference type="InterPro" id="IPR045233">
    <property type="entry name" value="GMPPB_N"/>
</dbReference>
<dbReference type="InterPro" id="IPR018357">
    <property type="entry name" value="Hexapep_transf_CS"/>
</dbReference>
<dbReference type="InterPro" id="IPR050486">
    <property type="entry name" value="Mannose-1P_guanyltransferase"/>
</dbReference>
<dbReference type="InterPro" id="IPR005835">
    <property type="entry name" value="NTP_transferase_dom"/>
</dbReference>
<dbReference type="InterPro" id="IPR029044">
    <property type="entry name" value="Nucleotide-diphossugar_trans"/>
</dbReference>
<dbReference type="PANTHER" id="PTHR22572">
    <property type="entry name" value="SUGAR-1-PHOSPHATE GUANYL TRANSFERASE"/>
    <property type="match status" value="1"/>
</dbReference>
<dbReference type="Pfam" id="PF25087">
    <property type="entry name" value="GMPPB_C"/>
    <property type="match status" value="1"/>
</dbReference>
<dbReference type="Pfam" id="PF00483">
    <property type="entry name" value="NTP_transferase"/>
    <property type="match status" value="1"/>
</dbReference>
<dbReference type="SUPFAM" id="SSF53448">
    <property type="entry name" value="Nucleotide-diphospho-sugar transferases"/>
    <property type="match status" value="1"/>
</dbReference>
<dbReference type="PROSITE" id="PS00101">
    <property type="entry name" value="HEXAPEP_TRANSFERASES"/>
    <property type="match status" value="1"/>
</dbReference>
<sequence>MKALILVGGFGTRLRPLTLTLPKPLVEFGNKPMILHQVEALAAAGVTDIVLAVNYRPEIMVEALKKYEKEYNVNITFSVENEPLGTAGPLALARDILAKDHSPFFVLNSDVICEYPFADLAAFHKAHGAEGTIVVTKVEEPSKYGVVVHYPNSESLIERFVEKPVEFVSNRINGGIYILNPSVLDRIEPRPTSIEKEVFPAMVNDKQLHSFDLEGYWMDVGQPKDYLTGTCLYLSSLRKHKPEILAPASSNIIGNVLIDPSATIGKNCKIGPNVVIGPNVTIGDGVRLQRCAILKSSRVRDHAWVKSSIVGWNSTLGSWSRLENVSVLGDDVVVNDEIYVNGGSILPHKSISANIEVPGTIVM</sequence>
<feature type="chain" id="PRO_0000068740" description="Mannose-1-phosphate guanyltransferase">
    <location>
        <begin position="1"/>
        <end position="363"/>
    </location>
</feature>
<feature type="sequence conflict" description="In Ref. 2; BAA13790." evidence="2" ref="2">
    <original>GI</original>
    <variation>VL</variation>
    <location>
        <begin position="175"/>
        <end position="176"/>
    </location>
</feature>
<accession>O74484</accession>
<accession>P78779</accession>
<organism>
    <name type="scientific">Schizosaccharomyces pombe (strain 972 / ATCC 24843)</name>
    <name type="common">Fission yeast</name>
    <dbReference type="NCBI Taxonomy" id="284812"/>
    <lineage>
        <taxon>Eukaryota</taxon>
        <taxon>Fungi</taxon>
        <taxon>Dikarya</taxon>
        <taxon>Ascomycota</taxon>
        <taxon>Taphrinomycotina</taxon>
        <taxon>Schizosaccharomycetes</taxon>
        <taxon>Schizosaccharomycetales</taxon>
        <taxon>Schizosaccharomycetaceae</taxon>
        <taxon>Schizosaccharomyces</taxon>
    </lineage>
</organism>
<evidence type="ECO:0000269" key="1">
    <source>
    </source>
</evidence>
<evidence type="ECO:0000305" key="2"/>
<comment type="function">
    <text evidence="1">Involved in cell wall synthesis where it is required for glycosylation. Involved in cell cycle progression through cell-size checkpoint. Required for the correct assembly of the septum.</text>
</comment>
<comment type="catalytic activity">
    <reaction>
        <text>alpha-D-mannose 1-phosphate + GTP + H(+) = GDP-alpha-D-mannose + diphosphate</text>
        <dbReference type="Rhea" id="RHEA:15229"/>
        <dbReference type="ChEBI" id="CHEBI:15378"/>
        <dbReference type="ChEBI" id="CHEBI:33019"/>
        <dbReference type="ChEBI" id="CHEBI:37565"/>
        <dbReference type="ChEBI" id="CHEBI:57527"/>
        <dbReference type="ChEBI" id="CHEBI:58409"/>
        <dbReference type="EC" id="2.7.7.13"/>
    </reaction>
</comment>
<comment type="pathway">
    <text>Nucleotide-sugar biosynthesis; GDP-alpha-D-mannose biosynthesis; GDP-alpha-D-mannose from alpha-D-mannose 1-phosphate (GTP route): step 1/1.</text>
</comment>
<comment type="subcellular location">
    <subcellularLocation>
        <location evidence="1">Cytoplasm</location>
    </subcellularLocation>
</comment>
<comment type="similarity">
    <text evidence="2">Belongs to the transferase hexapeptide repeat family.</text>
</comment>
<protein>
    <recommendedName>
        <fullName>Mannose-1-phosphate guanyltransferase</fullName>
        <ecNumber>2.7.7.13</ecNumber>
    </recommendedName>
    <alternativeName>
        <fullName>GDP-mannose pyrophosphorylase</fullName>
    </alternativeName>
    <alternativeName>
        <fullName>GTP-mannose-1-phosphate guanylyltransferase</fullName>
    </alternativeName>
</protein>
<gene>
    <name type="primary">mpg1</name>
    <name type="ORF">SPCC1906.01</name>
</gene>
<proteinExistence type="evidence at transcript level"/>
<name>MPG1_SCHPO</name>